<evidence type="ECO:0000250" key="1">
    <source>
        <dbReference type="UniProtKB" id="P00568"/>
    </source>
</evidence>
<evidence type="ECO:0000250" key="2">
    <source>
        <dbReference type="UniProtKB" id="P05081"/>
    </source>
</evidence>
<evidence type="ECO:0000255" key="3">
    <source>
        <dbReference type="HAMAP-Rule" id="MF_03171"/>
    </source>
</evidence>
<evidence type="ECO:0000269" key="4">
    <source>
    </source>
</evidence>
<name>KAD1_CYPCA</name>
<protein>
    <recommendedName>
        <fullName evidence="3">Adenylate kinase isoenzyme 1</fullName>
        <shortName evidence="3">AK 1</shortName>
        <ecNumber evidence="1 3">2.7.4.3</ecNumber>
        <ecNumber evidence="1">2.7.4.4</ecNumber>
        <ecNumber evidence="1 3">2.7.4.6</ecNumber>
    </recommendedName>
    <alternativeName>
        <fullName evidence="3">ATP-AMP transphosphorylase 1</fullName>
    </alternativeName>
    <alternativeName>
        <fullName evidence="3">ATP:AMP phosphotransferase</fullName>
    </alternativeName>
    <alternativeName>
        <fullName evidence="3">Adenylate monophosphate kinase</fullName>
    </alternativeName>
    <alternativeName>
        <fullName evidence="3">Myokinase</fullName>
    </alternativeName>
</protein>
<organism>
    <name type="scientific">Cyprinus carpio</name>
    <name type="common">Common carp</name>
    <dbReference type="NCBI Taxonomy" id="7962"/>
    <lineage>
        <taxon>Eukaryota</taxon>
        <taxon>Metazoa</taxon>
        <taxon>Chordata</taxon>
        <taxon>Craniata</taxon>
        <taxon>Vertebrata</taxon>
        <taxon>Euteleostomi</taxon>
        <taxon>Actinopterygii</taxon>
        <taxon>Neopterygii</taxon>
        <taxon>Teleostei</taxon>
        <taxon>Ostariophysi</taxon>
        <taxon>Cypriniformes</taxon>
        <taxon>Cyprinidae</taxon>
        <taxon>Cyprininae</taxon>
        <taxon>Cyprinus</taxon>
    </lineage>
</organism>
<gene>
    <name type="primary">ak1</name>
</gene>
<dbReference type="EC" id="2.7.4.3" evidence="1 3"/>
<dbReference type="EC" id="2.7.4.4" evidence="1"/>
<dbReference type="EC" id="2.7.4.6" evidence="1 3"/>
<dbReference type="PIR" id="S00394">
    <property type="entry name" value="KICAC"/>
</dbReference>
<dbReference type="RefSeq" id="XP_042579010.1">
    <property type="nucleotide sequence ID" value="XM_042723076.1"/>
</dbReference>
<dbReference type="SMR" id="P12115"/>
<dbReference type="iPTMnet" id="P12115"/>
<dbReference type="Ensembl" id="ENSCCRT00010095265.1">
    <property type="protein sequence ID" value="ENSCCRP00010085888.1"/>
    <property type="gene ID" value="ENSCCRG00010037435.1"/>
</dbReference>
<dbReference type="Ensembl" id="ENSCCRT00015052309.1">
    <property type="protein sequence ID" value="ENSCCRP00015050609.1"/>
    <property type="gene ID" value="ENSCCRG00015020900.1"/>
</dbReference>
<dbReference type="Ensembl" id="ENSCCRT00020091592.1">
    <property type="protein sequence ID" value="ENSCCRP00020083699.1"/>
    <property type="gene ID" value="ENSCCRG00020038567.1"/>
</dbReference>
<dbReference type="GeneID" id="122137307"/>
<dbReference type="OrthoDB" id="442176at2759"/>
<dbReference type="SABIO-RK" id="P12115"/>
<dbReference type="Proteomes" id="UP000694384">
    <property type="component" value="Unplaced"/>
</dbReference>
<dbReference type="Proteomes" id="UP000694427">
    <property type="component" value="Unplaced"/>
</dbReference>
<dbReference type="Proteomes" id="UP000694700">
    <property type="component" value="Unplaced"/>
</dbReference>
<dbReference type="Proteomes" id="UP000694701">
    <property type="component" value="Unplaced"/>
</dbReference>
<dbReference type="Proteomes" id="UP001155660">
    <property type="component" value="Chromosome B5"/>
</dbReference>
<dbReference type="GO" id="GO:0005737">
    <property type="term" value="C:cytoplasm"/>
    <property type="evidence" value="ECO:0007669"/>
    <property type="project" value="UniProtKB-SubCell"/>
</dbReference>
<dbReference type="GO" id="GO:0004017">
    <property type="term" value="F:adenylate kinase activity"/>
    <property type="evidence" value="ECO:0007669"/>
    <property type="project" value="UniProtKB-UniRule"/>
</dbReference>
<dbReference type="GO" id="GO:0005524">
    <property type="term" value="F:ATP binding"/>
    <property type="evidence" value="ECO:0007669"/>
    <property type="project" value="UniProtKB-KW"/>
</dbReference>
<dbReference type="GO" id="GO:0047506">
    <property type="term" value="F:deoxyadenylate kinase activity"/>
    <property type="evidence" value="ECO:0007669"/>
    <property type="project" value="RHEA"/>
</dbReference>
<dbReference type="GO" id="GO:0004550">
    <property type="term" value="F:nucleoside diphosphate kinase activity"/>
    <property type="evidence" value="ECO:0000250"/>
    <property type="project" value="UniProtKB"/>
</dbReference>
<dbReference type="GO" id="GO:0006172">
    <property type="term" value="P:ADP biosynthetic process"/>
    <property type="evidence" value="ECO:0007669"/>
    <property type="project" value="UniProtKB-UniRule"/>
</dbReference>
<dbReference type="GO" id="GO:0046033">
    <property type="term" value="P:AMP metabolic process"/>
    <property type="evidence" value="ECO:0007669"/>
    <property type="project" value="UniProtKB-UniRule"/>
</dbReference>
<dbReference type="GO" id="GO:0046034">
    <property type="term" value="P:ATP metabolic process"/>
    <property type="evidence" value="ECO:0007669"/>
    <property type="project" value="UniProtKB-UniRule"/>
</dbReference>
<dbReference type="GO" id="GO:0009142">
    <property type="term" value="P:nucleoside triphosphate biosynthetic process"/>
    <property type="evidence" value="ECO:0007669"/>
    <property type="project" value="InterPro"/>
</dbReference>
<dbReference type="CDD" id="cd01428">
    <property type="entry name" value="ADK"/>
    <property type="match status" value="1"/>
</dbReference>
<dbReference type="FunFam" id="3.40.50.300:FF:000315">
    <property type="entry name" value="Adenylate kinase 1"/>
    <property type="match status" value="1"/>
</dbReference>
<dbReference type="Gene3D" id="3.40.50.300">
    <property type="entry name" value="P-loop containing nucleotide triphosphate hydrolases"/>
    <property type="match status" value="1"/>
</dbReference>
<dbReference type="HAMAP" id="MF_00235">
    <property type="entry name" value="Adenylate_kinase_Adk"/>
    <property type="match status" value="1"/>
</dbReference>
<dbReference type="HAMAP" id="MF_03171">
    <property type="entry name" value="Adenylate_kinase_AK1"/>
    <property type="match status" value="1"/>
</dbReference>
<dbReference type="InterPro" id="IPR000850">
    <property type="entry name" value="Adenylat/UMP-CMP_kin"/>
</dbReference>
<dbReference type="InterPro" id="IPR033690">
    <property type="entry name" value="Adenylat_kinase_CS"/>
</dbReference>
<dbReference type="InterPro" id="IPR028582">
    <property type="entry name" value="AK1"/>
</dbReference>
<dbReference type="InterPro" id="IPR006267">
    <property type="entry name" value="AK1/5"/>
</dbReference>
<dbReference type="InterPro" id="IPR027417">
    <property type="entry name" value="P-loop_NTPase"/>
</dbReference>
<dbReference type="NCBIfam" id="TIGR01360">
    <property type="entry name" value="aden_kin_iso1"/>
    <property type="match status" value="1"/>
</dbReference>
<dbReference type="NCBIfam" id="NF011100">
    <property type="entry name" value="PRK14527.1"/>
    <property type="match status" value="1"/>
</dbReference>
<dbReference type="PANTHER" id="PTHR23359">
    <property type="entry name" value="NUCLEOTIDE KINASE"/>
    <property type="match status" value="1"/>
</dbReference>
<dbReference type="Pfam" id="PF00406">
    <property type="entry name" value="ADK"/>
    <property type="match status" value="1"/>
</dbReference>
<dbReference type="PRINTS" id="PR00094">
    <property type="entry name" value="ADENYLTKNASE"/>
</dbReference>
<dbReference type="SUPFAM" id="SSF52540">
    <property type="entry name" value="P-loop containing nucleoside triphosphate hydrolases"/>
    <property type="match status" value="1"/>
</dbReference>
<dbReference type="PROSITE" id="PS00113">
    <property type="entry name" value="ADENYLATE_KINASE"/>
    <property type="match status" value="1"/>
</dbReference>
<feature type="initiator methionine" description="Removed" evidence="4">
    <location>
        <position position="1"/>
    </location>
</feature>
<feature type="chain" id="PRO_0000158908" description="Adenylate kinase isoenzyme 1">
    <location>
        <begin position="2"/>
        <end position="194"/>
    </location>
</feature>
<feature type="region of interest" description="NMP" evidence="3">
    <location>
        <begin position="38"/>
        <end position="67"/>
    </location>
</feature>
<feature type="region of interest" description="LID" evidence="3">
    <location>
        <begin position="131"/>
        <end position="141"/>
    </location>
</feature>
<feature type="binding site" evidence="3">
    <location>
        <begin position="18"/>
        <end position="23"/>
    </location>
    <ligand>
        <name>ATP</name>
        <dbReference type="ChEBI" id="CHEBI:30616"/>
    </ligand>
</feature>
<feature type="binding site" evidence="3">
    <location>
        <position position="39"/>
    </location>
    <ligand>
        <name>AMP</name>
        <dbReference type="ChEBI" id="CHEBI:456215"/>
    </ligand>
</feature>
<feature type="binding site" evidence="3">
    <location>
        <position position="44"/>
    </location>
    <ligand>
        <name>AMP</name>
        <dbReference type="ChEBI" id="CHEBI:456215"/>
    </ligand>
</feature>
<feature type="binding site" evidence="3">
    <location>
        <begin position="65"/>
        <end position="67"/>
    </location>
    <ligand>
        <name>AMP</name>
        <dbReference type="ChEBI" id="CHEBI:456215"/>
    </ligand>
</feature>
<feature type="binding site" evidence="3">
    <location>
        <begin position="94"/>
        <end position="97"/>
    </location>
    <ligand>
        <name>AMP</name>
        <dbReference type="ChEBI" id="CHEBI:456215"/>
    </ligand>
</feature>
<feature type="binding site" evidence="3">
    <location>
        <position position="101"/>
    </location>
    <ligand>
        <name>AMP</name>
        <dbReference type="ChEBI" id="CHEBI:456215"/>
    </ligand>
</feature>
<feature type="binding site" evidence="3">
    <location>
        <position position="132"/>
    </location>
    <ligand>
        <name>ATP</name>
        <dbReference type="ChEBI" id="CHEBI:30616"/>
    </ligand>
</feature>
<feature type="binding site" evidence="3">
    <location>
        <position position="138"/>
    </location>
    <ligand>
        <name>AMP</name>
        <dbReference type="ChEBI" id="CHEBI:456215"/>
    </ligand>
</feature>
<feature type="binding site" evidence="3">
    <location>
        <position position="149"/>
    </location>
    <ligand>
        <name>AMP</name>
        <dbReference type="ChEBI" id="CHEBI:456215"/>
    </ligand>
</feature>
<feature type="binding site" evidence="3">
    <location>
        <position position="177"/>
    </location>
    <ligand>
        <name>ATP</name>
        <dbReference type="ChEBI" id="CHEBI:30616"/>
    </ligand>
</feature>
<feature type="modified residue" description="N-acetylalanine" evidence="4">
    <location>
        <position position="2"/>
    </location>
</feature>
<accession>P12115</accession>
<sequence>MADKIKDAKIVFVVGGPGSGKGTQCEKIVEKYGYTHLSSGDLLRAEVASGSERGKQLQAIMQKGELVPLDTVLDMIKDAMIAKADVSKGYLIDGYPREVKQGEEFEKKIGAPALLLYIDAKAETMVQRLMKRGQTSGRSDDNEETIKKRLDLYYKATEPVIAYYETRGIVRKINSELPVDEVFAIVVKAIDELK</sequence>
<keyword id="KW-0007">Acetylation</keyword>
<keyword id="KW-0067">ATP-binding</keyword>
<keyword id="KW-0963">Cytoplasm</keyword>
<keyword id="KW-0903">Direct protein sequencing</keyword>
<keyword id="KW-0418">Kinase</keyword>
<keyword id="KW-0547">Nucleotide-binding</keyword>
<keyword id="KW-1185">Reference proteome</keyword>
<keyword id="KW-0808">Transferase</keyword>
<comment type="function">
    <text evidence="1 2 3">Catalyzes the reversible transfer of the terminal phosphate group between ATP and AMP. Also displays broad nucleoside diphosphate kinase activity. Plays an important role in cellular energy homeostasis and in adenine nucleotide metabolism (By similarity). Also catalyzes at a very low rate the synthesis of thiamine triphosphate (ThTP) from thiamine diphosphate (ThDP) and ADP (By similarity).</text>
</comment>
<comment type="catalytic activity">
    <reaction evidence="1">
        <text>a ribonucleoside 5'-phosphate + ATP = a ribonucleoside 5'-diphosphate + ADP</text>
        <dbReference type="Rhea" id="RHEA:24036"/>
        <dbReference type="ChEBI" id="CHEBI:30616"/>
        <dbReference type="ChEBI" id="CHEBI:57930"/>
        <dbReference type="ChEBI" id="CHEBI:58043"/>
        <dbReference type="ChEBI" id="CHEBI:456216"/>
        <dbReference type="EC" id="2.7.4.4"/>
    </reaction>
</comment>
<comment type="catalytic activity">
    <reaction evidence="1 3">
        <text>AMP + ATP = 2 ADP</text>
        <dbReference type="Rhea" id="RHEA:12973"/>
        <dbReference type="ChEBI" id="CHEBI:30616"/>
        <dbReference type="ChEBI" id="CHEBI:456215"/>
        <dbReference type="ChEBI" id="CHEBI:456216"/>
        <dbReference type="EC" id="2.7.4.3"/>
    </reaction>
</comment>
<comment type="catalytic activity">
    <reaction evidence="1">
        <text>dAMP + ATP = dADP + ADP</text>
        <dbReference type="Rhea" id="RHEA:23100"/>
        <dbReference type="ChEBI" id="CHEBI:30616"/>
        <dbReference type="ChEBI" id="CHEBI:57667"/>
        <dbReference type="ChEBI" id="CHEBI:58245"/>
        <dbReference type="ChEBI" id="CHEBI:456216"/>
    </reaction>
</comment>
<comment type="catalytic activity">
    <reaction evidence="2">
        <text>dATP + AMP = dADP + ADP</text>
        <dbReference type="Rhea" id="RHEA:79899"/>
        <dbReference type="ChEBI" id="CHEBI:57667"/>
        <dbReference type="ChEBI" id="CHEBI:61404"/>
        <dbReference type="ChEBI" id="CHEBI:456215"/>
        <dbReference type="ChEBI" id="CHEBI:456216"/>
    </reaction>
</comment>
<comment type="catalytic activity">
    <reaction evidence="2">
        <text>dAMP + dATP = 2 dADP</text>
        <dbReference type="Rhea" id="RHEA:78311"/>
        <dbReference type="ChEBI" id="CHEBI:57667"/>
        <dbReference type="ChEBI" id="CHEBI:58245"/>
        <dbReference type="ChEBI" id="CHEBI:61404"/>
    </reaction>
</comment>
<comment type="catalytic activity">
    <reaction evidence="1 3">
        <text>a 2'-deoxyribonucleoside 5'-diphosphate + ATP = a 2'-deoxyribonucleoside 5'-triphosphate + ADP</text>
        <dbReference type="Rhea" id="RHEA:44640"/>
        <dbReference type="ChEBI" id="CHEBI:30616"/>
        <dbReference type="ChEBI" id="CHEBI:61560"/>
        <dbReference type="ChEBI" id="CHEBI:73316"/>
        <dbReference type="ChEBI" id="CHEBI:456216"/>
        <dbReference type="EC" id="2.7.4.6"/>
    </reaction>
</comment>
<comment type="catalytic activity">
    <reaction evidence="1">
        <text>a ribonucleoside 5'-diphosphate + ATP = a ribonucleoside 5'-triphosphate + ADP</text>
        <dbReference type="Rhea" id="RHEA:18113"/>
        <dbReference type="ChEBI" id="CHEBI:30616"/>
        <dbReference type="ChEBI" id="CHEBI:57930"/>
        <dbReference type="ChEBI" id="CHEBI:61557"/>
        <dbReference type="ChEBI" id="CHEBI:456216"/>
        <dbReference type="EC" id="2.7.4.6"/>
    </reaction>
</comment>
<comment type="catalytic activity">
    <reaction evidence="1">
        <text>CDP + GTP = CTP + GDP</text>
        <dbReference type="Rhea" id="RHEA:79859"/>
        <dbReference type="ChEBI" id="CHEBI:37563"/>
        <dbReference type="ChEBI" id="CHEBI:37565"/>
        <dbReference type="ChEBI" id="CHEBI:58069"/>
        <dbReference type="ChEBI" id="CHEBI:58189"/>
    </reaction>
</comment>
<comment type="catalytic activity">
    <reaction evidence="1">
        <text>GDP + ATP = GTP + ADP</text>
        <dbReference type="Rhea" id="RHEA:27686"/>
        <dbReference type="ChEBI" id="CHEBI:30616"/>
        <dbReference type="ChEBI" id="CHEBI:37565"/>
        <dbReference type="ChEBI" id="CHEBI:58189"/>
        <dbReference type="ChEBI" id="CHEBI:456216"/>
        <dbReference type="EC" id="2.7.4.6"/>
    </reaction>
</comment>
<comment type="catalytic activity">
    <reaction evidence="1">
        <text>UDP + ATP = UTP + ADP</text>
        <dbReference type="Rhea" id="RHEA:25098"/>
        <dbReference type="ChEBI" id="CHEBI:30616"/>
        <dbReference type="ChEBI" id="CHEBI:46398"/>
        <dbReference type="ChEBI" id="CHEBI:58223"/>
        <dbReference type="ChEBI" id="CHEBI:456216"/>
        <dbReference type="EC" id="2.7.4.6"/>
    </reaction>
</comment>
<comment type="catalytic activity">
    <reaction evidence="1">
        <text>GTP + UDP = UTP + GDP</text>
        <dbReference type="Rhea" id="RHEA:79863"/>
        <dbReference type="ChEBI" id="CHEBI:37565"/>
        <dbReference type="ChEBI" id="CHEBI:46398"/>
        <dbReference type="ChEBI" id="CHEBI:58189"/>
        <dbReference type="ChEBI" id="CHEBI:58223"/>
    </reaction>
</comment>
<comment type="catalytic activity">
    <reaction evidence="1">
        <text>dTDP + GTP = dTTP + GDP</text>
        <dbReference type="Rhea" id="RHEA:79867"/>
        <dbReference type="ChEBI" id="CHEBI:37565"/>
        <dbReference type="ChEBI" id="CHEBI:37568"/>
        <dbReference type="ChEBI" id="CHEBI:58189"/>
        <dbReference type="ChEBI" id="CHEBI:58369"/>
    </reaction>
</comment>
<comment type="catalytic activity">
    <reaction evidence="1">
        <text>dCDP + GTP = dCTP + GDP</text>
        <dbReference type="Rhea" id="RHEA:79875"/>
        <dbReference type="ChEBI" id="CHEBI:37565"/>
        <dbReference type="ChEBI" id="CHEBI:58189"/>
        <dbReference type="ChEBI" id="CHEBI:58593"/>
        <dbReference type="ChEBI" id="CHEBI:61481"/>
    </reaction>
</comment>
<comment type="catalytic activity">
    <reaction evidence="1">
        <text>dGDP + ATP = dGTP + ADP</text>
        <dbReference type="Rhea" id="RHEA:27690"/>
        <dbReference type="ChEBI" id="CHEBI:30616"/>
        <dbReference type="ChEBI" id="CHEBI:58595"/>
        <dbReference type="ChEBI" id="CHEBI:61429"/>
        <dbReference type="ChEBI" id="CHEBI:456216"/>
        <dbReference type="EC" id="2.7.4.6"/>
    </reaction>
</comment>
<comment type="catalytic activity">
    <reaction evidence="1">
        <text>dADP + GTP = dATP + GDP</text>
        <dbReference type="Rhea" id="RHEA:79871"/>
        <dbReference type="ChEBI" id="CHEBI:37565"/>
        <dbReference type="ChEBI" id="CHEBI:57667"/>
        <dbReference type="ChEBI" id="CHEBI:58189"/>
        <dbReference type="ChEBI" id="CHEBI:61404"/>
    </reaction>
</comment>
<comment type="catalytic activity">
    <reaction evidence="2">
        <text>thiamine diphosphate + ADP = thiamine triphosphate + AMP</text>
        <dbReference type="Rhea" id="RHEA:69180"/>
        <dbReference type="ChEBI" id="CHEBI:58937"/>
        <dbReference type="ChEBI" id="CHEBI:58938"/>
        <dbReference type="ChEBI" id="CHEBI:456215"/>
        <dbReference type="ChEBI" id="CHEBI:456216"/>
    </reaction>
</comment>
<comment type="cofactor">
    <cofactor evidence="2">
        <name>Mg(2+)</name>
        <dbReference type="ChEBI" id="CHEBI:18420"/>
    </cofactor>
</comment>
<comment type="subunit">
    <text evidence="1 3">Monomer.</text>
</comment>
<comment type="subcellular location">
    <subcellularLocation>
        <location evidence="1 3">Cytoplasm</location>
    </subcellularLocation>
</comment>
<comment type="domain">
    <text evidence="1 3">Consists of three domains, a large central CORE domain and two small peripheral domains, NMPbind and LID, which undergo movements during catalysis. The LID domain closes over the site of phosphoryl transfer upon ATP binding. Assembling and dissambling the active center during each catalytic cycle provides an effective means to prevent ATP hydrolysis.</text>
</comment>
<comment type="similarity">
    <text evidence="3">Belongs to the adenylate kinase family. AK1 subfamily.</text>
</comment>
<proteinExistence type="evidence at protein level"/>
<reference key="1">
    <citation type="journal article" date="1988" name="Protein Seq. Data Anal.">
        <title>Amino acid sequence and three-dimensional structure of cytosolic adenylate kinase from carp muscle.</title>
        <authorList>
            <person name="Reuner C."/>
            <person name="Hable M."/>
            <person name="Wilmanns M."/>
            <person name="Kiefer E."/>
            <person name="Schiltz E."/>
            <person name="Schulz G.E."/>
        </authorList>
    </citation>
    <scope>PROTEIN SEQUENCE OF 2-194</scope>
    <scope>ACETYLATION AT ALA-2</scope>
    <scope>X-RAY CRYSTALLOGRAPHY (5.8 ANGSTROMS)</scope>
    <source>
        <tissue>Muscle</tissue>
    </source>
</reference>